<feature type="chain" id="PRO_0000104671" description="Large ribosomal subunit protein uL15">
    <location>
        <begin position="1"/>
        <end position="146"/>
    </location>
</feature>
<feature type="region of interest" description="Disordered" evidence="2">
    <location>
        <begin position="1"/>
        <end position="65"/>
    </location>
</feature>
<feature type="compositionally biased region" description="Basic and acidic residues" evidence="2">
    <location>
        <begin position="1"/>
        <end position="13"/>
    </location>
</feature>
<feature type="compositionally biased region" description="Gly residues" evidence="2">
    <location>
        <begin position="21"/>
        <end position="31"/>
    </location>
</feature>
<feature type="compositionally biased region" description="Gly residues" evidence="2">
    <location>
        <begin position="42"/>
        <end position="52"/>
    </location>
</feature>
<reference key="1">
    <citation type="journal article" date="1999" name="Biosci. Biotechnol. Biochem.">
        <title>Sequence analysis of a 32-kb region including the major ribosomal protein gene clusters from alkaliphilic Bacillus sp. strain C-125.</title>
        <authorList>
            <person name="Takami H."/>
            <person name="Takaki Y."/>
            <person name="Nakasone K."/>
            <person name="Hirama C."/>
            <person name="Inoue A."/>
            <person name="Horikoshi K."/>
        </authorList>
    </citation>
    <scope>NUCLEOTIDE SEQUENCE [GENOMIC DNA]</scope>
    <source>
        <strain>ATCC BAA-125 / DSM 18197 / FERM 7344 / JCM 9153 / C-125</strain>
    </source>
</reference>
<reference key="2">
    <citation type="journal article" date="2000" name="Nucleic Acids Res.">
        <title>Complete genome sequence of the alkaliphilic bacterium Bacillus halodurans and genomic sequence comparison with Bacillus subtilis.</title>
        <authorList>
            <person name="Takami H."/>
            <person name="Nakasone K."/>
            <person name="Takaki Y."/>
            <person name="Maeno G."/>
            <person name="Sasaki R."/>
            <person name="Masui N."/>
            <person name="Fuji F."/>
            <person name="Hirama C."/>
            <person name="Nakamura Y."/>
            <person name="Ogasawara N."/>
            <person name="Kuhara S."/>
            <person name="Horikoshi K."/>
        </authorList>
    </citation>
    <scope>NUCLEOTIDE SEQUENCE [LARGE SCALE GENOMIC DNA]</scope>
    <source>
        <strain>ATCC BAA-125 / DSM 18197 / FERM 7344 / JCM 9153 / C-125</strain>
    </source>
</reference>
<reference key="3">
    <citation type="journal article" date="1992" name="J. Gen. Microbiol.">
        <title>Molecular cloning and characterization of an alkalophilic Bacillus sp. C125 gene homologous to Bacillus subtilis secY.</title>
        <authorList>
            <person name="Kang S.K."/>
            <person name="Kudo T."/>
            <person name="Horikoshi K."/>
        </authorList>
    </citation>
    <scope>NUCLEOTIDE SEQUENCE [GENOMIC DNA] OF 81-146</scope>
    <source>
        <strain>ATCC BAA-125 / DSM 18197 / FERM 7344 / JCM 9153 / C-125</strain>
    </source>
</reference>
<comment type="function">
    <text evidence="1">Binds to the 23S rRNA.</text>
</comment>
<comment type="subunit">
    <text evidence="1">Part of the 50S ribosomal subunit.</text>
</comment>
<comment type="similarity">
    <text evidence="1">Belongs to the universal ribosomal protein uL15 family.</text>
</comment>
<proteinExistence type="inferred from homology"/>
<dbReference type="EMBL" id="AB017508">
    <property type="protein sequence ID" value="BAA75290.1"/>
    <property type="molecule type" value="Genomic_DNA"/>
</dbReference>
<dbReference type="EMBL" id="BA000004">
    <property type="protein sequence ID" value="BAB03872.1"/>
    <property type="molecule type" value="Genomic_DNA"/>
</dbReference>
<dbReference type="EMBL" id="D10360">
    <property type="protein sequence ID" value="BAA01190.1"/>
    <property type="molecule type" value="Genomic_DNA"/>
</dbReference>
<dbReference type="PIR" id="A44859">
    <property type="entry name" value="A44859"/>
</dbReference>
<dbReference type="PIR" id="T44402">
    <property type="entry name" value="T44402"/>
</dbReference>
<dbReference type="RefSeq" id="WP_010896336.1">
    <property type="nucleotide sequence ID" value="NC_002570.2"/>
</dbReference>
<dbReference type="SMR" id="P38373"/>
<dbReference type="STRING" id="272558.gene:10725993"/>
<dbReference type="GeneID" id="87595694"/>
<dbReference type="KEGG" id="bha:BH0153"/>
<dbReference type="eggNOG" id="COG0200">
    <property type="taxonomic scope" value="Bacteria"/>
</dbReference>
<dbReference type="HOGENOM" id="CLU_055188_4_2_9"/>
<dbReference type="OrthoDB" id="9810293at2"/>
<dbReference type="Proteomes" id="UP000001258">
    <property type="component" value="Chromosome"/>
</dbReference>
<dbReference type="GO" id="GO:0022625">
    <property type="term" value="C:cytosolic large ribosomal subunit"/>
    <property type="evidence" value="ECO:0007669"/>
    <property type="project" value="TreeGrafter"/>
</dbReference>
<dbReference type="GO" id="GO:0019843">
    <property type="term" value="F:rRNA binding"/>
    <property type="evidence" value="ECO:0007669"/>
    <property type="project" value="UniProtKB-UniRule"/>
</dbReference>
<dbReference type="GO" id="GO:0003735">
    <property type="term" value="F:structural constituent of ribosome"/>
    <property type="evidence" value="ECO:0007669"/>
    <property type="project" value="InterPro"/>
</dbReference>
<dbReference type="GO" id="GO:0006412">
    <property type="term" value="P:translation"/>
    <property type="evidence" value="ECO:0007669"/>
    <property type="project" value="UniProtKB-UniRule"/>
</dbReference>
<dbReference type="FunFam" id="3.100.10.10:FF:000004">
    <property type="entry name" value="50S ribosomal protein L15"/>
    <property type="match status" value="1"/>
</dbReference>
<dbReference type="Gene3D" id="3.100.10.10">
    <property type="match status" value="1"/>
</dbReference>
<dbReference type="HAMAP" id="MF_01341">
    <property type="entry name" value="Ribosomal_uL15"/>
    <property type="match status" value="1"/>
</dbReference>
<dbReference type="InterPro" id="IPR030878">
    <property type="entry name" value="Ribosomal_uL15"/>
</dbReference>
<dbReference type="InterPro" id="IPR021131">
    <property type="entry name" value="Ribosomal_uL15/eL18"/>
</dbReference>
<dbReference type="InterPro" id="IPR036227">
    <property type="entry name" value="Ribosomal_uL15/eL18_sf"/>
</dbReference>
<dbReference type="InterPro" id="IPR005749">
    <property type="entry name" value="Ribosomal_uL15_bac-type"/>
</dbReference>
<dbReference type="InterPro" id="IPR001196">
    <property type="entry name" value="Ribosomal_uL15_CS"/>
</dbReference>
<dbReference type="NCBIfam" id="TIGR01071">
    <property type="entry name" value="rplO_bact"/>
    <property type="match status" value="1"/>
</dbReference>
<dbReference type="PANTHER" id="PTHR12934">
    <property type="entry name" value="50S RIBOSOMAL PROTEIN L15"/>
    <property type="match status" value="1"/>
</dbReference>
<dbReference type="PANTHER" id="PTHR12934:SF11">
    <property type="entry name" value="LARGE RIBOSOMAL SUBUNIT PROTEIN UL15M"/>
    <property type="match status" value="1"/>
</dbReference>
<dbReference type="Pfam" id="PF00828">
    <property type="entry name" value="Ribosomal_L27A"/>
    <property type="match status" value="1"/>
</dbReference>
<dbReference type="SUPFAM" id="SSF52080">
    <property type="entry name" value="Ribosomal proteins L15p and L18e"/>
    <property type="match status" value="1"/>
</dbReference>
<dbReference type="PROSITE" id="PS00475">
    <property type="entry name" value="RIBOSOMAL_L15"/>
    <property type="match status" value="1"/>
</dbReference>
<gene>
    <name evidence="1" type="primary">rplO</name>
    <name type="ordered locus">BH0153</name>
</gene>
<organism>
    <name type="scientific">Halalkalibacterium halodurans (strain ATCC BAA-125 / DSM 18197 / FERM 7344 / JCM 9153 / C-125)</name>
    <name type="common">Bacillus halodurans</name>
    <dbReference type="NCBI Taxonomy" id="272558"/>
    <lineage>
        <taxon>Bacteria</taxon>
        <taxon>Bacillati</taxon>
        <taxon>Bacillota</taxon>
        <taxon>Bacilli</taxon>
        <taxon>Bacillales</taxon>
        <taxon>Bacillaceae</taxon>
        <taxon>Halalkalibacterium (ex Joshi et al. 2022)</taxon>
    </lineage>
</organism>
<keyword id="KW-1185">Reference proteome</keyword>
<keyword id="KW-0687">Ribonucleoprotein</keyword>
<keyword id="KW-0689">Ribosomal protein</keyword>
<keyword id="KW-0694">RNA-binding</keyword>
<keyword id="KW-0699">rRNA-binding</keyword>
<sequence>MKLHELKPAEGSRKVRNRVGRGIGSGNGKTAGKGHKGQNARSGGGVRPGFEGGQNPLYRRLPKRGFTNPTRKEFAVVNLEKLNRFEDGTEVSPELLLETGVVSNAKDGIKILGNGKLEKKLTVKANKFSASAVEAIEAAGGKTEVI</sequence>
<evidence type="ECO:0000255" key="1">
    <source>
        <dbReference type="HAMAP-Rule" id="MF_01341"/>
    </source>
</evidence>
<evidence type="ECO:0000256" key="2">
    <source>
        <dbReference type="SAM" id="MobiDB-lite"/>
    </source>
</evidence>
<evidence type="ECO:0000305" key="3"/>
<protein>
    <recommendedName>
        <fullName evidence="1">Large ribosomal subunit protein uL15</fullName>
    </recommendedName>
    <alternativeName>
        <fullName evidence="3">50S ribosomal protein L15</fullName>
    </alternativeName>
</protein>
<accession>P38373</accession>
<accession>Q9JPW8</accession>
<accession>Q9WWJ2</accession>
<name>RL15_HALH5</name>